<proteinExistence type="inferred from homology"/>
<feature type="chain" id="PRO_0000224625" description="Valine--tRNA ligase">
    <location>
        <begin position="1"/>
        <end position="869"/>
    </location>
</feature>
<feature type="short sequence motif" description="'HIGH' region">
    <location>
        <begin position="47"/>
        <end position="57"/>
    </location>
</feature>
<feature type="short sequence motif" description="'KMSKS' region">
    <location>
        <begin position="521"/>
        <end position="525"/>
    </location>
</feature>
<feature type="binding site" evidence="1">
    <location>
        <position position="524"/>
    </location>
    <ligand>
        <name>ATP</name>
        <dbReference type="ChEBI" id="CHEBI:30616"/>
    </ligand>
</feature>
<accession>Q8TLI4</accession>
<dbReference type="EC" id="6.1.1.9" evidence="1"/>
<dbReference type="EMBL" id="AE010299">
    <property type="protein sequence ID" value="AAM06425.1"/>
    <property type="molecule type" value="Genomic_DNA"/>
</dbReference>
<dbReference type="RefSeq" id="WP_011022991.1">
    <property type="nucleotide sequence ID" value="NC_003552.1"/>
</dbReference>
<dbReference type="SMR" id="Q8TLI4"/>
<dbReference type="FunCoup" id="Q8TLI4">
    <property type="interactions" value="157"/>
</dbReference>
<dbReference type="STRING" id="188937.MA_3052"/>
<dbReference type="EnsemblBacteria" id="AAM06425">
    <property type="protein sequence ID" value="AAM06425"/>
    <property type="gene ID" value="MA_3052"/>
</dbReference>
<dbReference type="GeneID" id="1474946"/>
<dbReference type="KEGG" id="mac:MA_3052"/>
<dbReference type="HOGENOM" id="CLU_001493_0_2_2"/>
<dbReference type="InParanoid" id="Q8TLI4"/>
<dbReference type="OrthoDB" id="23906at2157"/>
<dbReference type="PhylomeDB" id="Q8TLI4"/>
<dbReference type="Proteomes" id="UP000002487">
    <property type="component" value="Chromosome"/>
</dbReference>
<dbReference type="GO" id="GO:0005829">
    <property type="term" value="C:cytosol"/>
    <property type="evidence" value="ECO:0000318"/>
    <property type="project" value="GO_Central"/>
</dbReference>
<dbReference type="GO" id="GO:0002161">
    <property type="term" value="F:aminoacyl-tRNA deacylase activity"/>
    <property type="evidence" value="ECO:0007669"/>
    <property type="project" value="InterPro"/>
</dbReference>
<dbReference type="GO" id="GO:0005524">
    <property type="term" value="F:ATP binding"/>
    <property type="evidence" value="ECO:0007669"/>
    <property type="project" value="UniProtKB-UniRule"/>
</dbReference>
<dbReference type="GO" id="GO:0004832">
    <property type="term" value="F:valine-tRNA ligase activity"/>
    <property type="evidence" value="ECO:0000318"/>
    <property type="project" value="GO_Central"/>
</dbReference>
<dbReference type="GO" id="GO:0006438">
    <property type="term" value="P:valyl-tRNA aminoacylation"/>
    <property type="evidence" value="ECO:0000318"/>
    <property type="project" value="GO_Central"/>
</dbReference>
<dbReference type="CDD" id="cd07962">
    <property type="entry name" value="Anticodon_Ia_Val"/>
    <property type="match status" value="1"/>
</dbReference>
<dbReference type="CDD" id="cd00817">
    <property type="entry name" value="ValRS_core"/>
    <property type="match status" value="1"/>
</dbReference>
<dbReference type="FunFam" id="3.30.720.200:FF:000001">
    <property type="entry name" value="Glycine--tRNA ligase 2"/>
    <property type="match status" value="1"/>
</dbReference>
<dbReference type="FunFam" id="1.10.730.10:FF:000033">
    <property type="entry name" value="Valine--tRNA ligase"/>
    <property type="match status" value="1"/>
</dbReference>
<dbReference type="FunFam" id="3.40.50.620:FF:000192">
    <property type="entry name" value="Valine--tRNA ligase"/>
    <property type="match status" value="1"/>
</dbReference>
<dbReference type="FunFam" id="3.40.50.620:FF:000324">
    <property type="entry name" value="Valine--tRNA ligase"/>
    <property type="match status" value="1"/>
</dbReference>
<dbReference type="Gene3D" id="3.30.720.200">
    <property type="match status" value="1"/>
</dbReference>
<dbReference type="Gene3D" id="3.40.50.620">
    <property type="entry name" value="HUPs"/>
    <property type="match status" value="2"/>
</dbReference>
<dbReference type="Gene3D" id="1.10.730.10">
    <property type="entry name" value="Isoleucyl-tRNA Synthetase, Domain 1"/>
    <property type="match status" value="1"/>
</dbReference>
<dbReference type="HAMAP" id="MF_02005">
    <property type="entry name" value="Val_tRNA_synth_type2"/>
    <property type="match status" value="1"/>
</dbReference>
<dbReference type="InterPro" id="IPR001412">
    <property type="entry name" value="aa-tRNA-synth_I_CS"/>
</dbReference>
<dbReference type="InterPro" id="IPR002300">
    <property type="entry name" value="aa-tRNA-synth_Ia"/>
</dbReference>
<dbReference type="InterPro" id="IPR033705">
    <property type="entry name" value="Anticodon_Ia_Val"/>
</dbReference>
<dbReference type="InterPro" id="IPR013155">
    <property type="entry name" value="M/V/L/I-tRNA-synth_anticd-bd"/>
</dbReference>
<dbReference type="InterPro" id="IPR014729">
    <property type="entry name" value="Rossmann-like_a/b/a_fold"/>
</dbReference>
<dbReference type="InterPro" id="IPR009080">
    <property type="entry name" value="tRNAsynth_Ia_anticodon-bd"/>
</dbReference>
<dbReference type="InterPro" id="IPR009008">
    <property type="entry name" value="Val/Leu/Ile-tRNA-synth_edit"/>
</dbReference>
<dbReference type="InterPro" id="IPR022874">
    <property type="entry name" value="Valine-tRNA_ligase_type_2"/>
</dbReference>
<dbReference type="InterPro" id="IPR002303">
    <property type="entry name" value="Valyl-tRNA_ligase"/>
</dbReference>
<dbReference type="NCBIfam" id="NF009687">
    <property type="entry name" value="PRK13208.1"/>
    <property type="match status" value="1"/>
</dbReference>
<dbReference type="NCBIfam" id="TIGR00422">
    <property type="entry name" value="valS"/>
    <property type="match status" value="1"/>
</dbReference>
<dbReference type="PANTHER" id="PTHR11946:SF93">
    <property type="entry name" value="VALINE--TRNA LIGASE, CHLOROPLASTIC_MITOCHONDRIAL 2"/>
    <property type="match status" value="1"/>
</dbReference>
<dbReference type="PANTHER" id="PTHR11946">
    <property type="entry name" value="VALYL-TRNA SYNTHETASES"/>
    <property type="match status" value="1"/>
</dbReference>
<dbReference type="Pfam" id="PF08264">
    <property type="entry name" value="Anticodon_1"/>
    <property type="match status" value="1"/>
</dbReference>
<dbReference type="Pfam" id="PF19302">
    <property type="entry name" value="DUF5915"/>
    <property type="match status" value="1"/>
</dbReference>
<dbReference type="Pfam" id="PF00133">
    <property type="entry name" value="tRNA-synt_1"/>
    <property type="match status" value="1"/>
</dbReference>
<dbReference type="PRINTS" id="PR00986">
    <property type="entry name" value="TRNASYNTHVAL"/>
</dbReference>
<dbReference type="SUPFAM" id="SSF47323">
    <property type="entry name" value="Anticodon-binding domain of a subclass of class I aminoacyl-tRNA synthetases"/>
    <property type="match status" value="1"/>
</dbReference>
<dbReference type="SUPFAM" id="SSF52374">
    <property type="entry name" value="Nucleotidylyl transferase"/>
    <property type="match status" value="1"/>
</dbReference>
<dbReference type="SUPFAM" id="SSF50677">
    <property type="entry name" value="ValRS/IleRS/LeuRS editing domain"/>
    <property type="match status" value="1"/>
</dbReference>
<dbReference type="PROSITE" id="PS00178">
    <property type="entry name" value="AA_TRNA_LIGASE_I"/>
    <property type="match status" value="1"/>
</dbReference>
<name>SYV_METAC</name>
<evidence type="ECO:0000255" key="1">
    <source>
        <dbReference type="HAMAP-Rule" id="MF_02005"/>
    </source>
</evidence>
<comment type="function">
    <text evidence="1">Catalyzes the attachment of valine to tRNA(Val). As ValRS can inadvertently accommodate and process structurally similar amino acids such as threonine, to avoid such errors, it has a 'posttransfer' editing activity that hydrolyzes mischarged Thr-tRNA(Val) in a tRNA-dependent manner.</text>
</comment>
<comment type="catalytic activity">
    <reaction evidence="1">
        <text>tRNA(Val) + L-valine + ATP = L-valyl-tRNA(Val) + AMP + diphosphate</text>
        <dbReference type="Rhea" id="RHEA:10704"/>
        <dbReference type="Rhea" id="RHEA-COMP:9672"/>
        <dbReference type="Rhea" id="RHEA-COMP:9708"/>
        <dbReference type="ChEBI" id="CHEBI:30616"/>
        <dbReference type="ChEBI" id="CHEBI:33019"/>
        <dbReference type="ChEBI" id="CHEBI:57762"/>
        <dbReference type="ChEBI" id="CHEBI:78442"/>
        <dbReference type="ChEBI" id="CHEBI:78537"/>
        <dbReference type="ChEBI" id="CHEBI:456215"/>
        <dbReference type="EC" id="6.1.1.9"/>
    </reaction>
</comment>
<comment type="subcellular location">
    <subcellularLocation>
        <location evidence="1">Cytoplasm</location>
    </subcellularLocation>
</comment>
<comment type="domain">
    <text evidence="1">ValRS has two distinct active sites: one for aminoacylation and one for editing. The misactivated threonine is translocated from the active site to the editing site.</text>
</comment>
<comment type="similarity">
    <text evidence="1">Belongs to the class-I aminoacyl-tRNA synthetase family. ValS type 2 subfamily.</text>
</comment>
<keyword id="KW-0030">Aminoacyl-tRNA synthetase</keyword>
<keyword id="KW-0067">ATP-binding</keyword>
<keyword id="KW-0963">Cytoplasm</keyword>
<keyword id="KW-0436">Ligase</keyword>
<keyword id="KW-0547">Nucleotide-binding</keyword>
<keyword id="KW-0648">Protein biosynthesis</keyword>
<keyword id="KW-1185">Reference proteome</keyword>
<gene>
    <name evidence="1" type="primary">valS</name>
    <name type="ordered locus">MA_3052</name>
</gene>
<protein>
    <recommendedName>
        <fullName evidence="1">Valine--tRNA ligase</fullName>
        <ecNumber evidence="1">6.1.1.9</ecNumber>
    </recommendedName>
    <alternativeName>
        <fullName evidence="1">Valyl-tRNA synthetase</fullName>
        <shortName evidence="1">ValRS</shortName>
    </alternativeName>
</protein>
<sequence>MTESEIPKEYNANEVEEKWMEKWNLSMYHFNWGEDPRPQYIIDTPPPYPTGNFHIGNALNWCYIDYIARYKRMRGYNVMFPQGWDCHGLPTEVKVEEIHGITKNQVPRAEFRKMCRELTAGNIEKMRKTMLRLGFSVDWSNEFVTMEPSYFVKTQKSFVRMYNDGHIYHEDHPVNWCPRCETAIAFAEVEYESRQTKLNFVHFDKVDIATTRPELMAACVAVAVNPKDERYSQHIGKEITVPIFGQKVTLIADEAVEPEFGTGAVMICTFGDKQDVRWWVKYGLPLVKALDKQGRMTKAAGKYEGMTLAECREAVIADLKAAGFLYDQKSLEQNVGLCWRCDTPIEILSEPQWFVKINHEGILKAADEIKWYPEYMKVRLQNWTGTMEWDWCISRQRIFATPIPIWYCKKCGEVMIAEESWLPIDPNENTPKKACACGSTEFEPETDVLDTWMDSSITALHVSGWESEHEMRLPTQIRPQGHDIIRTWAFYTILRSLALEGKRPWDSIVINGMVLGPDGHKMSKSLGNVISPEEVTTQYSADAFRQWGAVGGSTGSDVMFRWKDVVSASRFLQKMWSIYRFSMSHLKDFEPADAENFPPDALLTIDRWLLSKLNKLVDTATKELDGYQFDSTFKAIRGFAWEVLADNYLELVKGRLYGEDPEGRKAAQYVLYTTTRTLSLLLAPFIPFFAEEMYSRFSEESVHTQTWPAVNEKLISEEAEAAGEMIKEITGEVRRYKSDLGMALNAPLKKIEIYNAEIDTGDIAGATNSEVELMAGAPSFEYVPVEVKPNMGFLGPRFRKEAGAVVKALQAEDPAAIEAQAASGKITITVNGEAVKLEPEAVEIRKEVISGGREVDVLDVKGAVVVIVR</sequence>
<reference key="1">
    <citation type="journal article" date="2002" name="Genome Res.">
        <title>The genome of Methanosarcina acetivorans reveals extensive metabolic and physiological diversity.</title>
        <authorList>
            <person name="Galagan J.E."/>
            <person name="Nusbaum C."/>
            <person name="Roy A."/>
            <person name="Endrizzi M.G."/>
            <person name="Macdonald P."/>
            <person name="FitzHugh W."/>
            <person name="Calvo S."/>
            <person name="Engels R."/>
            <person name="Smirnov S."/>
            <person name="Atnoor D."/>
            <person name="Brown A."/>
            <person name="Allen N."/>
            <person name="Naylor J."/>
            <person name="Stange-Thomann N."/>
            <person name="DeArellano K."/>
            <person name="Johnson R."/>
            <person name="Linton L."/>
            <person name="McEwan P."/>
            <person name="McKernan K."/>
            <person name="Talamas J."/>
            <person name="Tirrell A."/>
            <person name="Ye W."/>
            <person name="Zimmer A."/>
            <person name="Barber R.D."/>
            <person name="Cann I."/>
            <person name="Graham D.E."/>
            <person name="Grahame D.A."/>
            <person name="Guss A.M."/>
            <person name="Hedderich R."/>
            <person name="Ingram-Smith C."/>
            <person name="Kuettner H.C."/>
            <person name="Krzycki J.A."/>
            <person name="Leigh J.A."/>
            <person name="Li W."/>
            <person name="Liu J."/>
            <person name="Mukhopadhyay B."/>
            <person name="Reeve J.N."/>
            <person name="Smith K."/>
            <person name="Springer T.A."/>
            <person name="Umayam L.A."/>
            <person name="White O."/>
            <person name="White R.H."/>
            <person name="de Macario E.C."/>
            <person name="Ferry J.G."/>
            <person name="Jarrell K.F."/>
            <person name="Jing H."/>
            <person name="Macario A.J.L."/>
            <person name="Paulsen I.T."/>
            <person name="Pritchett M."/>
            <person name="Sowers K.R."/>
            <person name="Swanson R.V."/>
            <person name="Zinder S.H."/>
            <person name="Lander E."/>
            <person name="Metcalf W.W."/>
            <person name="Birren B."/>
        </authorList>
    </citation>
    <scope>NUCLEOTIDE SEQUENCE [LARGE SCALE GENOMIC DNA]</scope>
    <source>
        <strain>ATCC 35395 / DSM 2834 / JCM 12185 / C2A</strain>
    </source>
</reference>
<organism>
    <name type="scientific">Methanosarcina acetivorans (strain ATCC 35395 / DSM 2834 / JCM 12185 / C2A)</name>
    <dbReference type="NCBI Taxonomy" id="188937"/>
    <lineage>
        <taxon>Archaea</taxon>
        <taxon>Methanobacteriati</taxon>
        <taxon>Methanobacteriota</taxon>
        <taxon>Stenosarchaea group</taxon>
        <taxon>Methanomicrobia</taxon>
        <taxon>Methanosarcinales</taxon>
        <taxon>Methanosarcinaceae</taxon>
        <taxon>Methanosarcina</taxon>
    </lineage>
</organism>